<keyword id="KW-0328">Glycosyltransferase</keyword>
<keyword id="KW-1185">Reference proteome</keyword>
<keyword id="KW-0808">Transferase</keyword>
<protein>
    <recommendedName>
        <fullName>UDP-glycosyltransferase 91B1</fullName>
        <ecNumber>2.4.1.-</ecNumber>
    </recommendedName>
</protein>
<feature type="chain" id="PRO_0000409142" description="UDP-glycosyltransferase 91B1">
    <location>
        <begin position="1"/>
        <end position="466"/>
    </location>
</feature>
<feature type="binding site" evidence="1">
    <location>
        <position position="286"/>
    </location>
    <ligand>
        <name>UDP-alpha-D-glucose</name>
        <dbReference type="ChEBI" id="CHEBI:58885"/>
    </ligand>
</feature>
<feature type="binding site" evidence="1">
    <location>
        <begin position="342"/>
        <end position="344"/>
    </location>
    <ligand>
        <name>UDP-alpha-D-glucose</name>
        <dbReference type="ChEBI" id="CHEBI:58885"/>
    </ligand>
</feature>
<feature type="binding site" evidence="1">
    <location>
        <begin position="359"/>
        <end position="367"/>
    </location>
    <ligand>
        <name>UDP-alpha-D-glucose</name>
        <dbReference type="ChEBI" id="CHEBI:58885"/>
    </ligand>
</feature>
<feature type="binding site" evidence="1">
    <location>
        <begin position="381"/>
        <end position="384"/>
    </location>
    <ligand>
        <name>UDP-alpha-D-glucose</name>
        <dbReference type="ChEBI" id="CHEBI:58885"/>
    </ligand>
</feature>
<feature type="sequence conflict" description="In Ref. 3; BAC43110." evidence="2" ref="3">
    <original>A</original>
    <variation>G</variation>
    <location>
        <position position="434"/>
    </location>
</feature>
<dbReference type="EC" id="2.4.1.-"/>
<dbReference type="EMBL" id="AB026639">
    <property type="protein sequence ID" value="BAA98174.1"/>
    <property type="molecule type" value="Genomic_DNA"/>
</dbReference>
<dbReference type="EMBL" id="CP002688">
    <property type="protein sequence ID" value="AED98070.1"/>
    <property type="molecule type" value="Genomic_DNA"/>
</dbReference>
<dbReference type="EMBL" id="AK118506">
    <property type="protein sequence ID" value="BAC43110.1"/>
    <property type="molecule type" value="mRNA"/>
</dbReference>
<dbReference type="EMBL" id="BT026361">
    <property type="protein sequence ID" value="ABH04468.1"/>
    <property type="molecule type" value="mRNA"/>
</dbReference>
<dbReference type="RefSeq" id="NP_201358.1">
    <property type="nucleotide sequence ID" value="NM_125953.2"/>
</dbReference>
<dbReference type="SMR" id="Q9LSM0"/>
<dbReference type="STRING" id="3702.Q9LSM0"/>
<dbReference type="CAZy" id="GT1">
    <property type="family name" value="Glycosyltransferase Family 1"/>
</dbReference>
<dbReference type="PaxDb" id="3702-AT5G65550.1"/>
<dbReference type="ProteomicsDB" id="243213"/>
<dbReference type="EnsemblPlants" id="AT5G65550.1">
    <property type="protein sequence ID" value="AT5G65550.1"/>
    <property type="gene ID" value="AT5G65550"/>
</dbReference>
<dbReference type="GeneID" id="836681"/>
<dbReference type="Gramene" id="AT5G65550.1">
    <property type="protein sequence ID" value="AT5G65550.1"/>
    <property type="gene ID" value="AT5G65550"/>
</dbReference>
<dbReference type="KEGG" id="ath:AT5G65550"/>
<dbReference type="Araport" id="AT5G65550"/>
<dbReference type="TAIR" id="AT5G65550"/>
<dbReference type="eggNOG" id="KOG1192">
    <property type="taxonomic scope" value="Eukaryota"/>
</dbReference>
<dbReference type="HOGENOM" id="CLU_001724_2_3_1"/>
<dbReference type="InParanoid" id="Q9LSM0"/>
<dbReference type="OMA" id="ETHIGYL"/>
<dbReference type="PhylomeDB" id="Q9LSM0"/>
<dbReference type="BioCyc" id="ARA:AT5G65550-MONOMER"/>
<dbReference type="PRO" id="PR:Q9LSM0"/>
<dbReference type="Proteomes" id="UP000006548">
    <property type="component" value="Chromosome 5"/>
</dbReference>
<dbReference type="ExpressionAtlas" id="Q9LSM0">
    <property type="expression patterns" value="baseline and differential"/>
</dbReference>
<dbReference type="GO" id="GO:0035251">
    <property type="term" value="F:UDP-glucosyltransferase activity"/>
    <property type="evidence" value="ECO:0007669"/>
    <property type="project" value="InterPro"/>
</dbReference>
<dbReference type="CDD" id="cd03784">
    <property type="entry name" value="GT1_Gtf-like"/>
    <property type="match status" value="1"/>
</dbReference>
<dbReference type="FunFam" id="3.40.50.2000:FF:000037">
    <property type="entry name" value="Glycosyltransferase"/>
    <property type="match status" value="1"/>
</dbReference>
<dbReference type="FunFam" id="3.40.50.2000:FF:000321">
    <property type="entry name" value="Glycosyltransferase"/>
    <property type="match status" value="1"/>
</dbReference>
<dbReference type="Gene3D" id="3.40.50.2000">
    <property type="entry name" value="Glycogen Phosphorylase B"/>
    <property type="match status" value="2"/>
</dbReference>
<dbReference type="InterPro" id="IPR050481">
    <property type="entry name" value="UDP-glycosyltransf_plant"/>
</dbReference>
<dbReference type="InterPro" id="IPR002213">
    <property type="entry name" value="UDP_glucos_trans"/>
</dbReference>
<dbReference type="InterPro" id="IPR035595">
    <property type="entry name" value="UDP_glycos_trans_CS"/>
</dbReference>
<dbReference type="PANTHER" id="PTHR48049">
    <property type="entry name" value="GLYCOSYLTRANSFERASE"/>
    <property type="match status" value="1"/>
</dbReference>
<dbReference type="PANTHER" id="PTHR48049:SF60">
    <property type="entry name" value="UDP-GLYCOSYLTRANSFERASE 91B1"/>
    <property type="match status" value="1"/>
</dbReference>
<dbReference type="Pfam" id="PF00201">
    <property type="entry name" value="UDPGT"/>
    <property type="match status" value="1"/>
</dbReference>
<dbReference type="SUPFAM" id="SSF53756">
    <property type="entry name" value="UDP-Glycosyltransferase/glycogen phosphorylase"/>
    <property type="match status" value="1"/>
</dbReference>
<dbReference type="PROSITE" id="PS00375">
    <property type="entry name" value="UDPGT"/>
    <property type="match status" value="1"/>
</dbReference>
<comment type="similarity">
    <text evidence="2">Belongs to the UDP-glycosyltransferase family.</text>
</comment>
<gene>
    <name type="primary">UGT91B1</name>
    <name type="ordered locus">At5g65550</name>
    <name type="ORF">K21L13.6</name>
</gene>
<reference key="1">
    <citation type="submission" date="1999-05" db="EMBL/GenBank/DDBJ databases">
        <title>Structural analysis of Arabidopsis thaliana chromosome 5. XI.</title>
        <authorList>
            <person name="Kaneko T."/>
            <person name="Katoh T."/>
            <person name="Asamizu E."/>
            <person name="Sato S."/>
            <person name="Nakamura Y."/>
            <person name="Kotani H."/>
            <person name="Tabata S."/>
        </authorList>
    </citation>
    <scope>NUCLEOTIDE SEQUENCE [LARGE SCALE GENOMIC DNA]</scope>
    <source>
        <strain>cv. Columbia</strain>
    </source>
</reference>
<reference key="2">
    <citation type="journal article" date="2017" name="Plant J.">
        <title>Araport11: a complete reannotation of the Arabidopsis thaliana reference genome.</title>
        <authorList>
            <person name="Cheng C.Y."/>
            <person name="Krishnakumar V."/>
            <person name="Chan A.P."/>
            <person name="Thibaud-Nissen F."/>
            <person name="Schobel S."/>
            <person name="Town C.D."/>
        </authorList>
    </citation>
    <scope>GENOME REANNOTATION</scope>
    <source>
        <strain>cv. Columbia</strain>
    </source>
</reference>
<reference key="3">
    <citation type="journal article" date="2002" name="Science">
        <title>Functional annotation of a full-length Arabidopsis cDNA collection.</title>
        <authorList>
            <person name="Seki M."/>
            <person name="Narusaka M."/>
            <person name="Kamiya A."/>
            <person name="Ishida J."/>
            <person name="Satou M."/>
            <person name="Sakurai T."/>
            <person name="Nakajima M."/>
            <person name="Enju A."/>
            <person name="Akiyama K."/>
            <person name="Oono Y."/>
            <person name="Muramatsu M."/>
            <person name="Hayashizaki Y."/>
            <person name="Kawai J."/>
            <person name="Carninci P."/>
            <person name="Itoh M."/>
            <person name="Ishii Y."/>
            <person name="Arakawa T."/>
            <person name="Shibata K."/>
            <person name="Shinagawa A."/>
            <person name="Shinozaki K."/>
        </authorList>
    </citation>
    <scope>NUCLEOTIDE SEQUENCE [LARGE SCALE MRNA]</scope>
    <source>
        <strain>cv. Columbia</strain>
    </source>
</reference>
<reference key="4">
    <citation type="submission" date="2006-08" db="EMBL/GenBank/DDBJ databases">
        <title>Arabidopsis ORF Clones.</title>
        <authorList>
            <person name="Quinitio C."/>
            <person name="Chen H."/>
            <person name="Kim C.J."/>
            <person name="Shinn P."/>
            <person name="Ecker J.R."/>
        </authorList>
    </citation>
    <scope>NUCLEOTIDE SEQUENCE [LARGE SCALE MRNA]</scope>
    <source>
        <strain>cv. Columbia</strain>
    </source>
</reference>
<reference key="5">
    <citation type="journal article" date="2001" name="J. Biol. Chem.">
        <title>Phylogenetic analysis of the UDP-glycosyltransferase multigene family of Arabidopsis thaliana.</title>
        <authorList>
            <person name="Li Y."/>
            <person name="Baldauf S."/>
            <person name="Lim E.K."/>
            <person name="Bowles D.J."/>
        </authorList>
    </citation>
    <scope>GENE FAMILY</scope>
</reference>
<name>U91B1_ARATH</name>
<organism>
    <name type="scientific">Arabidopsis thaliana</name>
    <name type="common">Mouse-ear cress</name>
    <dbReference type="NCBI Taxonomy" id="3702"/>
    <lineage>
        <taxon>Eukaryota</taxon>
        <taxon>Viridiplantae</taxon>
        <taxon>Streptophyta</taxon>
        <taxon>Embryophyta</taxon>
        <taxon>Tracheophyta</taxon>
        <taxon>Spermatophyta</taxon>
        <taxon>Magnoliopsida</taxon>
        <taxon>eudicotyledons</taxon>
        <taxon>Gunneridae</taxon>
        <taxon>Pentapetalae</taxon>
        <taxon>rosids</taxon>
        <taxon>malvids</taxon>
        <taxon>Brassicales</taxon>
        <taxon>Brassicaceae</taxon>
        <taxon>Camelineae</taxon>
        <taxon>Arabidopsis</taxon>
    </lineage>
</organism>
<sequence>MAEPKPKLHVAVFPWLALGHMIPYLQLSKLIARKGHTVSFISTARNISRLPNISSDLSVNFVSLPLSQTVDHLPENAEATTDVPETHIAYLKKAFDGLSEAFTEFLEASKPNWIVYDILHHWVPPIAEKLGVRRAIFCTFNAASIIIIGGPASVMIQGHDPRKTAEDLIVPPPWVPFETNIVYRLFEAKRIMEYPTAGVTGVELNDNCRLGLAYVGSEVIVIRSCMELEPEWIQLLSKLQGKPVIPIGLLPATPMDDADDEGTWLDIREWLDRHQAKSVVYVALGTEVTISNEEIQGLAHGLELCRLPFFWTLRKRTRASMLLPDGFKERVKERGVIWTEWVPQTKILSHGSVGGFVTHCGWGSAVEGLSFGVPLIMFPCNLDQPLVARLLSGMNIGLEIPRNERDGLFTSASVAETIRHVVVEEEGKIYRNNAASQQKKIFGNKRLQDQYADGFIEFLENPIAGV</sequence>
<accession>Q9LSM0</accession>
<accession>Q8GX09</accession>
<evidence type="ECO:0000250" key="1"/>
<evidence type="ECO:0000305" key="2"/>
<proteinExistence type="evidence at transcript level"/>